<feature type="chain" id="PRO_0000205900" description="Separin">
    <location>
        <begin position="1"/>
        <end position="2120"/>
    </location>
</feature>
<feature type="domain" description="Peptidase C50">
    <location>
        <begin position="1945"/>
        <end position="2040"/>
    </location>
</feature>
<feature type="region of interest" description="Disordered" evidence="1">
    <location>
        <begin position="1299"/>
        <end position="1355"/>
    </location>
</feature>
<feature type="region of interest" description="Disordered" evidence="1">
    <location>
        <begin position="1412"/>
        <end position="1485"/>
    </location>
</feature>
<feature type="region of interest" description="Disordered" evidence="1">
    <location>
        <begin position="1507"/>
        <end position="1561"/>
    </location>
</feature>
<feature type="compositionally biased region" description="Basic residues" evidence="1">
    <location>
        <begin position="1418"/>
        <end position="1432"/>
    </location>
</feature>
<feature type="compositionally biased region" description="Basic residues" evidence="1">
    <location>
        <begin position="1454"/>
        <end position="1463"/>
    </location>
</feature>
<feature type="compositionally biased region" description="Basic and acidic residues" evidence="1">
    <location>
        <begin position="1464"/>
        <end position="1473"/>
    </location>
</feature>
<feature type="compositionally biased region" description="Basic and acidic residues" evidence="1">
    <location>
        <begin position="1548"/>
        <end position="1558"/>
    </location>
</feature>
<feature type="active site">
    <location>
        <position position="2029"/>
    </location>
</feature>
<feature type="site" description="Cleavage; by autolysis">
    <location>
        <begin position="1506"/>
        <end position="1507"/>
    </location>
</feature>
<feature type="site" description="Cleavage; by autolysis">
    <location>
        <begin position="1535"/>
        <end position="1536"/>
    </location>
</feature>
<feature type="modified residue" description="Phosphoserine" evidence="4">
    <location>
        <position position="1126"/>
    </location>
</feature>
<feature type="modified residue" description="Phosphoserine" evidence="9 10">
    <location>
        <position position="1396"/>
    </location>
</feature>
<feature type="modified residue" description="Phosphoserine" evidence="9 10">
    <location>
        <position position="1399"/>
    </location>
</feature>
<feature type="modified residue" description="Phosphoserine" evidence="9 11 12">
    <location>
        <position position="1508"/>
    </location>
</feature>
<feature type="splice variant" id="VSP_009361" description="In isoform 2." evidence="7">
    <location>
        <begin position="1"/>
        <end position="325"/>
    </location>
</feature>
<feature type="sequence variant" id="VAR_057703" description="In dbSNP:rs1318648.">
    <original>S</original>
    <variation>R</variation>
    <location>
        <position position="614"/>
    </location>
</feature>
<feature type="sequence variant" id="VAR_057704" description="In dbSNP:rs34424268.">
    <original>R</original>
    <variation>Q</variation>
    <location>
        <position position="699"/>
    </location>
</feature>
<feature type="sequence variant" id="VAR_057705" description="In dbSNP:rs34130634.">
    <original>I</original>
    <variation>V</variation>
    <location>
        <position position="1136"/>
    </location>
</feature>
<feature type="sequence variant" id="VAR_057706" description="In dbSNP:rs35428211.">
    <original>T</original>
    <variation>A</variation>
    <location>
        <position position="1157"/>
    </location>
</feature>
<feature type="sequence variant" id="VAR_057707" description="In dbSNP:rs34396464.">
    <original>Q</original>
    <variation>H</variation>
    <location>
        <position position="1237"/>
    </location>
</feature>
<feature type="sequence variant" id="VAR_057708" description="In dbSNP:rs1110719.">
    <original>K</original>
    <variation>M</variation>
    <location>
        <position position="1435"/>
    </location>
</feature>
<feature type="mutagenesis site" description="Abolishes phosphorylation at this site, as well as the negative regulation due to phosphorylation.">
    <original>S</original>
    <variation>A</variation>
    <location>
        <position position="1126"/>
    </location>
</feature>
<feature type="mutagenesis site" description="Abolishes autocleavage; when associated with R-1178; E-1181; R-1207 and E-1210. Does not affect the protease function." evidence="5">
    <original>EIMR</original>
    <variation>RIME</variation>
    <location>
        <begin position="1483"/>
        <end position="1486"/>
    </location>
</feature>
<feature type="mutagenesis site" description="Abolishes autocleavage; when associated with A-1181 and A-1210." evidence="6">
    <original>R</original>
    <variation>A</variation>
    <location>
        <position position="1486"/>
    </location>
</feature>
<feature type="mutagenesis site" description="Does not affect autocleavage. Does not affect the protease function." evidence="5">
    <original>EILR</original>
    <variation>RILE</variation>
    <location>
        <begin position="1503"/>
        <end position="1506"/>
    </location>
</feature>
<feature type="mutagenesis site" description="Abolishes autocleavage; when associated with A-1161 and A-1210." evidence="6">
    <original>R</original>
    <variation>A</variation>
    <location>
        <position position="1506"/>
    </location>
</feature>
<feature type="mutagenesis site" description="Strongly reduces autocleavage at this site, but enhances autocleavage at site 1. Does not affect the protease function." evidence="5">
    <original>ELLR</original>
    <variation>RLLE</variation>
    <location>
        <begin position="1532"/>
        <end position="1535"/>
    </location>
</feature>
<feature type="mutagenesis site" description="Abolishes autocleavage; when associated with A-1161 and A-1281." evidence="6">
    <original>R</original>
    <variation>A</variation>
    <location>
        <position position="1535"/>
    </location>
</feature>
<feature type="mutagenesis site" description="Abolishes protease activity." evidence="5">
    <original>C</original>
    <variation>A</variation>
    <location>
        <position position="2029"/>
    </location>
</feature>
<feature type="sequence conflict" description="In Ref. 1; AAR18247." evidence="8" ref="1">
    <original>A</original>
    <variation>D</variation>
    <location>
        <position position="25"/>
    </location>
</feature>
<feature type="sequence conflict" description="In Ref. 1; AAR18247." evidence="8" ref="1">
    <original>A</original>
    <variation>V</variation>
    <location>
        <position position="116"/>
    </location>
</feature>
<feature type="sequence conflict" description="In Ref. 1; AAR18247 and 2; BAA11482." evidence="8" ref="1 2">
    <original>M</original>
    <variation>I</variation>
    <location>
        <position position="693"/>
    </location>
</feature>
<feature type="sequence conflict" description="In Ref. 1; AAR18247 and 2; BAA11482." evidence="8" ref="1 2">
    <original>R</original>
    <variation>S</variation>
    <location>
        <position position="1329"/>
    </location>
</feature>
<feature type="sequence conflict" description="In Ref. 1; AAR18247 and 2; BAA11482." evidence="8" ref="1 2">
    <original>R</original>
    <variation>Q</variation>
    <location>
        <position position="1561"/>
    </location>
</feature>
<feature type="sequence conflict" description="In Ref. 1; AAR18247 and 2; BAA11482." evidence="8" ref="1 2">
    <original>R</original>
    <variation>H</variation>
    <location>
        <position position="2037"/>
    </location>
</feature>
<feature type="helix" evidence="13">
    <location>
        <begin position="252"/>
        <end position="262"/>
    </location>
</feature>
<feature type="helix" evidence="13">
    <location>
        <begin position="265"/>
        <end position="270"/>
    </location>
</feature>
<feature type="helix" evidence="13">
    <location>
        <begin position="278"/>
        <end position="290"/>
    </location>
</feature>
<feature type="turn" evidence="13">
    <location>
        <begin position="291"/>
        <end position="293"/>
    </location>
</feature>
<feature type="helix" evidence="13">
    <location>
        <begin position="299"/>
        <end position="301"/>
    </location>
</feature>
<feature type="turn" evidence="13">
    <location>
        <begin position="302"/>
        <end position="312"/>
    </location>
</feature>
<feature type="helix" evidence="13">
    <location>
        <begin position="313"/>
        <end position="319"/>
    </location>
</feature>
<feature type="turn" evidence="13">
    <location>
        <begin position="327"/>
        <end position="329"/>
    </location>
</feature>
<feature type="helix" evidence="13">
    <location>
        <begin position="330"/>
        <end position="345"/>
    </location>
</feature>
<feature type="helix" evidence="13">
    <location>
        <begin position="352"/>
        <end position="366"/>
    </location>
</feature>
<feature type="helix" evidence="13">
    <location>
        <begin position="377"/>
        <end position="389"/>
    </location>
</feature>
<feature type="helix" evidence="13">
    <location>
        <begin position="390"/>
        <end position="392"/>
    </location>
</feature>
<feature type="strand" evidence="13">
    <location>
        <begin position="395"/>
        <end position="397"/>
    </location>
</feature>
<feature type="helix" evidence="13">
    <location>
        <begin position="401"/>
        <end position="417"/>
    </location>
</feature>
<feature type="helix" evidence="13">
    <location>
        <begin position="428"/>
        <end position="441"/>
    </location>
</feature>
<feature type="helix" evidence="13">
    <location>
        <begin position="446"/>
        <end position="468"/>
    </location>
</feature>
<feature type="turn" evidence="13">
    <location>
        <begin position="469"/>
        <end position="471"/>
    </location>
</feature>
<feature type="helix" evidence="13">
    <location>
        <begin position="474"/>
        <end position="489"/>
    </location>
</feature>
<feature type="strand" evidence="13">
    <location>
        <begin position="496"/>
        <end position="498"/>
    </location>
</feature>
<feature type="helix" evidence="13">
    <location>
        <begin position="500"/>
        <end position="516"/>
    </location>
</feature>
<feature type="helix" evidence="13">
    <location>
        <begin position="520"/>
        <end position="533"/>
    </location>
</feature>
<feature type="turn" evidence="13">
    <location>
        <begin position="534"/>
        <end position="536"/>
    </location>
</feature>
<feature type="turn" evidence="13">
    <location>
        <begin position="539"/>
        <end position="542"/>
    </location>
</feature>
<feature type="helix" evidence="13">
    <location>
        <begin position="543"/>
        <end position="559"/>
    </location>
</feature>
<feature type="turn" evidence="13">
    <location>
        <begin position="563"/>
        <end position="566"/>
    </location>
</feature>
<feature type="helix" evidence="13">
    <location>
        <begin position="569"/>
        <end position="572"/>
    </location>
</feature>
<feature type="helix" evidence="13">
    <location>
        <begin position="578"/>
        <end position="594"/>
    </location>
</feature>
<feature type="helix" evidence="13">
    <location>
        <begin position="600"/>
        <end position="613"/>
    </location>
</feature>
<feature type="helix" evidence="13">
    <location>
        <begin position="619"/>
        <end position="636"/>
    </location>
</feature>
<feature type="strand" evidence="13">
    <location>
        <begin position="642"/>
        <end position="644"/>
    </location>
</feature>
<feature type="helix" evidence="13">
    <location>
        <begin position="649"/>
        <end position="662"/>
    </location>
</feature>
<feature type="strand" evidence="13">
    <location>
        <begin position="667"/>
        <end position="669"/>
    </location>
</feature>
<feature type="helix" evidence="13">
    <location>
        <begin position="670"/>
        <end position="701"/>
    </location>
</feature>
<feature type="helix" evidence="13">
    <location>
        <begin position="729"/>
        <end position="736"/>
    </location>
</feature>
<feature type="helix" evidence="13">
    <location>
        <begin position="740"/>
        <end position="758"/>
    </location>
</feature>
<feature type="helix" evidence="13">
    <location>
        <begin position="769"/>
        <end position="785"/>
    </location>
</feature>
<feature type="helix" evidence="13">
    <location>
        <begin position="789"/>
        <end position="805"/>
    </location>
</feature>
<feature type="helix" evidence="13">
    <location>
        <begin position="809"/>
        <end position="825"/>
    </location>
</feature>
<feature type="helix" evidence="13">
    <location>
        <begin position="830"/>
        <end position="844"/>
    </location>
</feature>
<feature type="strand" evidence="13">
    <location>
        <begin position="848"/>
        <end position="850"/>
    </location>
</feature>
<feature type="helix" evidence="13">
    <location>
        <begin position="851"/>
        <end position="870"/>
    </location>
</feature>
<feature type="helix" evidence="13">
    <location>
        <begin position="874"/>
        <end position="885"/>
    </location>
</feature>
<feature type="helix" evidence="13">
    <location>
        <begin position="888"/>
        <end position="891"/>
    </location>
</feature>
<feature type="helix" evidence="13">
    <location>
        <begin position="895"/>
        <end position="912"/>
    </location>
</feature>
<feature type="helix" evidence="13">
    <location>
        <begin position="921"/>
        <end position="928"/>
    </location>
</feature>
<feature type="helix" evidence="13">
    <location>
        <begin position="935"/>
        <end position="953"/>
    </location>
</feature>
<feature type="turn" evidence="13">
    <location>
        <begin position="971"/>
        <end position="974"/>
    </location>
</feature>
<feature type="helix" evidence="13">
    <location>
        <begin position="976"/>
        <end position="1000"/>
    </location>
</feature>
<feature type="helix" evidence="13">
    <location>
        <begin position="1004"/>
        <end position="1021"/>
    </location>
</feature>
<feature type="helix" evidence="13">
    <location>
        <begin position="1024"/>
        <end position="1040"/>
    </location>
</feature>
<feature type="helix" evidence="13">
    <location>
        <begin position="1044"/>
        <end position="1061"/>
    </location>
</feature>
<feature type="helix" evidence="13">
    <location>
        <begin position="1148"/>
        <end position="1152"/>
    </location>
</feature>
<feature type="helix" evidence="13">
    <location>
        <begin position="1154"/>
        <end position="1173"/>
    </location>
</feature>
<feature type="helix" evidence="13">
    <location>
        <begin position="1178"/>
        <end position="1206"/>
    </location>
</feature>
<feature type="helix" evidence="13">
    <location>
        <begin position="1218"/>
        <end position="1231"/>
    </location>
</feature>
<feature type="helix" evidence="13">
    <location>
        <begin position="1233"/>
        <end position="1236"/>
    </location>
</feature>
<feature type="turn" evidence="13">
    <location>
        <begin position="1242"/>
        <end position="1246"/>
    </location>
</feature>
<feature type="helix" evidence="13">
    <location>
        <begin position="1247"/>
        <end position="1256"/>
    </location>
</feature>
<feature type="turn" evidence="13">
    <location>
        <begin position="1258"/>
        <end position="1260"/>
    </location>
</feature>
<feature type="helix" evidence="13">
    <location>
        <begin position="1263"/>
        <end position="1277"/>
    </location>
</feature>
<feature type="helix" evidence="13">
    <location>
        <begin position="1574"/>
        <end position="1588"/>
    </location>
</feature>
<feature type="strand" evidence="13">
    <location>
        <begin position="1589"/>
        <end position="1591"/>
    </location>
</feature>
<feature type="helix" evidence="13">
    <location>
        <begin position="1595"/>
        <end position="1607"/>
    </location>
</feature>
<feature type="strand" evidence="13">
    <location>
        <begin position="1610"/>
        <end position="1612"/>
    </location>
</feature>
<feature type="helix" evidence="13">
    <location>
        <begin position="1613"/>
        <end position="1622"/>
    </location>
</feature>
<feature type="helix" evidence="13">
    <location>
        <begin position="1626"/>
        <end position="1646"/>
    </location>
</feature>
<feature type="helix" evidence="13">
    <location>
        <begin position="1668"/>
        <end position="1677"/>
    </location>
</feature>
<feature type="strand" evidence="13">
    <location>
        <begin position="1686"/>
        <end position="1688"/>
    </location>
</feature>
<feature type="helix" evidence="13">
    <location>
        <begin position="1689"/>
        <end position="1700"/>
    </location>
</feature>
<feature type="strand" evidence="13">
    <location>
        <begin position="1706"/>
        <end position="1714"/>
    </location>
</feature>
<feature type="strand" evidence="13">
    <location>
        <begin position="1723"/>
        <end position="1730"/>
    </location>
</feature>
<feature type="strand" evidence="13">
    <location>
        <begin position="1732"/>
        <end position="1734"/>
    </location>
</feature>
<feature type="strand" evidence="13">
    <location>
        <begin position="1737"/>
        <end position="1742"/>
    </location>
</feature>
<feature type="strand" evidence="13">
    <location>
        <begin position="1744"/>
        <end position="1748"/>
    </location>
</feature>
<feature type="helix" evidence="13">
    <location>
        <begin position="1751"/>
        <end position="1767"/>
    </location>
</feature>
<feature type="helix" evidence="13">
    <location>
        <begin position="1773"/>
        <end position="1797"/>
    </location>
</feature>
<feature type="turn" evidence="13">
    <location>
        <begin position="1798"/>
        <end position="1803"/>
    </location>
</feature>
<feature type="helix" evidence="13">
    <location>
        <begin position="1804"/>
        <end position="1806"/>
    </location>
</feature>
<feature type="strand" evidence="13">
    <location>
        <begin position="1812"/>
        <end position="1814"/>
    </location>
</feature>
<feature type="helix" evidence="13">
    <location>
        <begin position="1815"/>
        <end position="1829"/>
    </location>
</feature>
<feature type="helix" evidence="13">
    <location>
        <begin position="1837"/>
        <end position="1842"/>
    </location>
</feature>
<feature type="helix" evidence="13">
    <location>
        <begin position="1846"/>
        <end position="1848"/>
    </location>
</feature>
<feature type="helix" evidence="13">
    <location>
        <begin position="1851"/>
        <end position="1861"/>
    </location>
</feature>
<feature type="strand" evidence="13">
    <location>
        <begin position="1863"/>
        <end position="1865"/>
    </location>
</feature>
<feature type="helix" evidence="13">
    <location>
        <begin position="1867"/>
        <end position="1879"/>
    </location>
</feature>
<feature type="strand" evidence="13">
    <location>
        <begin position="1890"/>
        <end position="1894"/>
    </location>
</feature>
<feature type="turn" evidence="13">
    <location>
        <begin position="1897"/>
        <end position="1899"/>
    </location>
</feature>
<feature type="strand" evidence="13">
    <location>
        <begin position="1900"/>
        <end position="1902"/>
    </location>
</feature>
<feature type="helix" evidence="13">
    <location>
        <begin position="1904"/>
        <end position="1906"/>
    </location>
</feature>
<feature type="strand" evidence="13">
    <location>
        <begin position="1911"/>
        <end position="1913"/>
    </location>
</feature>
<feature type="strand" evidence="13">
    <location>
        <begin position="1915"/>
        <end position="1917"/>
    </location>
</feature>
<feature type="helix" evidence="13">
    <location>
        <begin position="1921"/>
        <end position="1933"/>
    </location>
</feature>
<feature type="helix" evidence="13">
    <location>
        <begin position="1937"/>
        <end position="1940"/>
    </location>
</feature>
<feature type="strand" evidence="13">
    <location>
        <begin position="1948"/>
        <end position="1952"/>
    </location>
</feature>
<feature type="helix" evidence="13">
    <location>
        <begin position="1959"/>
        <end position="1971"/>
    </location>
</feature>
<feature type="strand" evidence="13">
    <location>
        <begin position="1978"/>
        <end position="1981"/>
    </location>
</feature>
<feature type="helix" evidence="13">
    <location>
        <begin position="1985"/>
        <end position="1994"/>
    </location>
</feature>
<feature type="strand" evidence="13">
    <location>
        <begin position="1996"/>
        <end position="2006"/>
    </location>
</feature>
<feature type="helix" evidence="13">
    <location>
        <begin position="2012"/>
        <end position="2016"/>
    </location>
</feature>
<feature type="strand" evidence="13">
    <location>
        <begin position="2022"/>
        <end position="2028"/>
    </location>
</feature>
<feature type="turn" evidence="13">
    <location>
        <begin position="2029"/>
        <end position="2032"/>
    </location>
</feature>
<feature type="helix" evidence="13">
    <location>
        <begin position="2045"/>
        <end position="2050"/>
    </location>
</feature>
<feature type="turn" evidence="13">
    <location>
        <begin position="2051"/>
        <end position="2053"/>
    </location>
</feature>
<feature type="strand" evidence="13">
    <location>
        <begin position="2055"/>
        <end position="2059"/>
    </location>
</feature>
<feature type="helix" evidence="13">
    <location>
        <begin position="2067"/>
        <end position="2083"/>
    </location>
</feature>
<feature type="helix" evidence="13">
    <location>
        <begin position="2089"/>
        <end position="2095"/>
    </location>
</feature>
<feature type="helix" evidence="13">
    <location>
        <begin position="2096"/>
        <end position="2098"/>
    </location>
</feature>
<feature type="strand" evidence="13">
    <location>
        <begin position="2099"/>
        <end position="2102"/>
    </location>
</feature>
<feature type="turn" evidence="13">
    <location>
        <begin position="2103"/>
        <end position="2105"/>
    </location>
</feature>
<feature type="strand" evidence="13">
    <location>
        <begin position="2106"/>
        <end position="2108"/>
    </location>
</feature>
<feature type="strand" evidence="13">
    <location>
        <begin position="2111"/>
        <end position="2115"/>
    </location>
</feature>
<proteinExistence type="evidence at protein level"/>
<comment type="function">
    <text evidence="2 3">Caspase-like protease, which plays a central role in the chromosome segregation by cleaving the SCC1/RAD21 subunit of the cohesin complex at the onset of anaphase. During most of the cell cycle, it is inactivated by different mechanisms.</text>
</comment>
<comment type="catalytic activity">
    <reaction>
        <text>All bonds known to be hydrolyzed by this endopeptidase have arginine in P1 and an acidic residue in P4. P6 is often occupied by an acidic residue or by a hydroxy-amino-acid residue, the phosphorylation of which enhances cleavage.</text>
        <dbReference type="EC" id="3.4.22.49"/>
    </reaction>
</comment>
<comment type="activity regulation">
    <text evidence="4 5 6">Regulated by at least two independent mechanisms. First, it is inactivated via its interaction with securin/PTTG1, which probably covers its active site. The association with PTTG1 is not only inhibitory, since PTTG1 is also required for activating it, the enzyme being inactive in cells in which PTTG1 is absent. PTTG1 degradation at anaphase, liberates it and triggers RAD21 cleavage. Second, phosphorylation at Ser-1126 inactivates it. The complete phosphorylation during mitosis, is removed when cells undergo anaphase. Activation of the enzyme at the metaphase-anaphase transition probably requires the removal of both securin and inhibitory phosphate.</text>
</comment>
<comment type="subunit">
    <text evidence="2 3">Interacts with PTTG1. Interacts with RAD21.</text>
</comment>
<comment type="subcellular location">
    <subcellularLocation>
        <location>Cytoplasm</location>
    </subcellularLocation>
    <subcellularLocation>
        <location>Nucleus</location>
    </subcellularLocation>
</comment>
<comment type="alternative products">
    <event type="alternative splicing"/>
    <isoform>
        <id>Q14674-1</id>
        <name>1</name>
        <sequence type="displayed"/>
    </isoform>
    <isoform>
        <id>Q14674-2</id>
        <name>2</name>
        <sequence type="described" ref="VSP_009361"/>
    </isoform>
</comment>
<comment type="PTM">
    <text>Autocleaves. This function, which is not essential for its protease activity, is unknown.</text>
</comment>
<comment type="PTM">
    <text evidence="4">Phosphorylated by CDK1. There are 8 Ser/Thr phosphorylation sites. Among them, Ser-1126 phosphorylation is the major site, which conducts to the enzyme inactivation.</text>
</comment>
<accession>Q14674</accession>
<protein>
    <recommendedName>
        <fullName>Separin</fullName>
        <ecNumber>3.4.22.49</ecNumber>
    </recommendedName>
    <alternativeName>
        <fullName>Caspase-like protein ESPL1</fullName>
    </alternativeName>
    <alternativeName>
        <fullName>Extra spindle poles-like 1 protein</fullName>
    </alternativeName>
    <alternativeName>
        <fullName>Separase</fullName>
    </alternativeName>
</protein>
<keyword id="KW-0002">3D-structure</keyword>
<keyword id="KW-0025">Alternative splicing</keyword>
<keyword id="KW-0068">Autocatalytic cleavage</keyword>
<keyword id="KW-0159">Chromosome partition</keyword>
<keyword id="KW-0963">Cytoplasm</keyword>
<keyword id="KW-0903">Direct protein sequencing</keyword>
<keyword id="KW-0378">Hydrolase</keyword>
<keyword id="KW-0539">Nucleus</keyword>
<keyword id="KW-0597">Phosphoprotein</keyword>
<keyword id="KW-0645">Protease</keyword>
<keyword id="KW-1267">Proteomics identification</keyword>
<keyword id="KW-1185">Reference proteome</keyword>
<keyword id="KW-0788">Thiol protease</keyword>
<name>ESPL1_HUMAN</name>
<evidence type="ECO:0000256" key="1">
    <source>
        <dbReference type="SAM" id="MobiDB-lite"/>
    </source>
</evidence>
<evidence type="ECO:0000269" key="2">
    <source>
    </source>
</evidence>
<evidence type="ECO:0000269" key="3">
    <source>
    </source>
</evidence>
<evidence type="ECO:0000269" key="4">
    <source>
    </source>
</evidence>
<evidence type="ECO:0000269" key="5">
    <source>
    </source>
</evidence>
<evidence type="ECO:0000269" key="6">
    <source>
    </source>
</evidence>
<evidence type="ECO:0000303" key="7">
    <source>
    </source>
</evidence>
<evidence type="ECO:0000305" key="8"/>
<evidence type="ECO:0007744" key="9">
    <source>
    </source>
</evidence>
<evidence type="ECO:0007744" key="10">
    <source>
    </source>
</evidence>
<evidence type="ECO:0007744" key="11">
    <source>
    </source>
</evidence>
<evidence type="ECO:0007744" key="12">
    <source>
    </source>
</evidence>
<evidence type="ECO:0007829" key="13">
    <source>
        <dbReference type="PDB" id="7NJ1"/>
    </source>
</evidence>
<sequence>MRSFKRVNFGTLLSSQKEAEELLPALKEFLSNPPAGFPSSRSDAERRQACDAILRACNQQLTAKLACPRHLGSLLELAELACDGYLVSTPQRPPLYLERILFVLLRNAAAQGSPEATLRLAQPLHACLVQCSREAAPQDYEAVARGSFSLLWKGAEALLERRAAFAARLKALSFLVLLEDESTPCEVPHFASPTACRAVAAHQLFDASGHGLNEADADFLDDLLSRHVIRALVGERGSSSGLLSPQRALCLLELTLEHCRRFCWSRHHDKAISAVEKAHSYLRNTNLAPSLQLCQLGVKLLQVGEEGPQAVAKLLIKASAVLSKSMEAPSPPLRALYESCQFFLSGLERGTKRRYRLDAILSLFAFLGGYCSLLQQLRDDGVYGGSSKQQQSFLQMYFQGLHLYTVVVYDFAQGCQIVDLADLTQLVDSCKSTVVWMLEALEGLSGQELTDHMGMTASYTSNLAYSFYSHKLYAEACAISEPLCQHLGLVKPGTYPEVPPEKLHRCFRLQVESLKKLGKQAQGCKMVILWLAALQPCSPEHMAEPVTFWVRVKMDAARAGDKELQLKTLRDSLSGWDPETLALLLREELQAYKAVRADTGQERFNIICDLLELSPEETPAGAWARATHLVELAQVLCYHDFTQQTNCSALDAIREALQLLDSVRPEAQARDQLLDDKAQALLWLYICTLEAKMQEGIERDRRAQAPGNLEEFEVNDLNYEDKLQEDRFLYSNIAFNLAADAAQSKCLDQALALWKELLTKGQAPAVRCLQQTAASLQILAALYQLVAKPMQALEVLLLLRIVSERLKDHSKAAGSSCHITQLLLTLGCPSYAQLHLEEAASSLKHLDQTTDTYLLLSLTCDLLRSQLYWTHQKVTKGVSLLLSVLRDPALQKSSKAWYLLRVQVLQLVAAYLSLPSNNLSHSLWEQLCAQGWQTPEIALIDSHKLLRSIILLLMGSDILSTQKAAVETSFLDYGENLVQKWQVLSEVLSCSEKLVCHLGRLGSVSEAKAFCLEALKLTTKLQIPRQCALFLVLKGELELARNDIDLCQSDLQQVLFLLESCTEFGGVTQHLDSVKKVHLQKGKQQAQVPCPPQLPEEELFLRGPALELVATVAKEPGPIAPSTNSSPVLKTKPQPIPNFLSHSPTCDCSLCASPVLTAVCLRWVLVTAGVRLAMGHQAQGLDLLQVVLKGCPEAAERLTQALQASLNHKTPPSLVPSLLDEILAQAYTLLALEGLNQPSNESLQKVLQSGLKFVAARIPHLEPWRASLLLIWALTKLGGLSCCTTQLFASSWGWQPPLIKSVPGSEPSKTQGQKRSGRGRQKLASAPLRLNNTSQKGLEGRGLPCTPKPPDRIRQAGPHVPFTVFEEVCPTESKPEVPQAPRVQQRVQTRLKVNFSDDSDLEDPVSAEAWLAEEPKRRGTASRGRGRARKGLSLKTDAVVAPGSAPGNPGLNGRSRRAKKVASRHCEERRPQRASDQARPGPEIMRTIPEEELTDNWRKMSFEILRGSDGEDSASGGKTPAPGPEAASGEWELLRLDSSKKKLPSPCPDKESDKDLGPRLRLPSAPVATGLSTLDSICDSLSVAFRGISHCPPSGLYAHLCRFLALCLGHRDPYATAFLVTESVSITCRHQLLTHLHRQLSKAQKHRGSLEIADQLQGLSLQEMPGDVPLARIQRLFSFRALESGHFPQPEKESFQERLALIPSGVTVCVLALATLQPGTVGNTLLLTRLEKDSPPVSVQIPTGQNKLHLRSVLNEFDAIQKAQKENSSCTDKREWWTGRLALDHRMEVLIASLEKSVLGCWKGLLLPSSEEPGPAQEASRLQELLQDCGWKYPDRTLLKIMLSGAGALTPQDIQALAYGLCPTQPERAQELLNEAVGRLQGLTVPSNSHLVLVLDKDLQKLPWESMPSLQALPVTRLPSFRFLLSYSIIKEYGASPVLSQGVDPRSTFYVLNPHNNLSSTEEQFRANFSSEAGWRGVVGEVPRPEQVQEALTKHDLYIYAGHGAGARFLDGQAVLRLSCRAVALLFGCSSAALAVRGNLEGAGIVLKYIMAGCPLFLGNLWDVTDRDIDRYTEALLQGWLGAGPGAPLLYYVNQARQAPRLKYLIGAAPIAYGLPVSLR</sequence>
<dbReference type="EC" id="3.4.22.49"/>
<dbReference type="EMBL" id="AY455930">
    <property type="protein sequence ID" value="AAR18247.1"/>
    <property type="molecule type" value="mRNA"/>
</dbReference>
<dbReference type="EMBL" id="D79987">
    <property type="protein sequence ID" value="BAA11482.2"/>
    <property type="molecule type" value="mRNA"/>
</dbReference>
<dbReference type="EMBL" id="AC021072">
    <property type="status" value="NOT_ANNOTATED_CDS"/>
    <property type="molecule type" value="Genomic_DNA"/>
</dbReference>
<dbReference type="EMBL" id="AC073611">
    <property type="status" value="NOT_ANNOTATED_CDS"/>
    <property type="molecule type" value="Genomic_DNA"/>
</dbReference>
<dbReference type="CCDS" id="CCDS8852.1">
    <molecule id="Q14674-1"/>
</dbReference>
<dbReference type="RefSeq" id="NP_036423.4">
    <molecule id="Q14674-1"/>
    <property type="nucleotide sequence ID" value="NM_012291.4"/>
</dbReference>
<dbReference type="RefSeq" id="XP_006719768.1">
    <molecule id="Q14674-1"/>
    <property type="nucleotide sequence ID" value="XM_006719705.4"/>
</dbReference>
<dbReference type="RefSeq" id="XP_011537326.1">
    <molecule id="Q14674-1"/>
    <property type="nucleotide sequence ID" value="XM_011539024.3"/>
</dbReference>
<dbReference type="RefSeq" id="XP_016875742.1">
    <molecule id="Q14674-2"/>
    <property type="nucleotide sequence ID" value="XM_017020253.2"/>
</dbReference>
<dbReference type="PDB" id="7NJ0">
    <property type="method" value="EM"/>
    <property type="resolution" value="3.60 A"/>
    <property type="chains" value="A=1-2120"/>
</dbReference>
<dbReference type="PDB" id="7NJ1">
    <property type="method" value="EM"/>
    <property type="resolution" value="2.90 A"/>
    <property type="chains" value="A=1-2120"/>
</dbReference>
<dbReference type="PDBsum" id="7NJ0"/>
<dbReference type="PDBsum" id="7NJ1"/>
<dbReference type="EMDB" id="EMD-12368"/>
<dbReference type="EMDB" id="EMD-12369"/>
<dbReference type="EMDB" id="EMD-3584"/>
<dbReference type="SMR" id="Q14674"/>
<dbReference type="BioGRID" id="115052">
    <property type="interactions" value="88"/>
</dbReference>
<dbReference type="CORUM" id="Q14674"/>
<dbReference type="DIP" id="DIP-46079N"/>
<dbReference type="ELM" id="Q14674"/>
<dbReference type="FunCoup" id="Q14674">
    <property type="interactions" value="1473"/>
</dbReference>
<dbReference type="IntAct" id="Q14674">
    <property type="interactions" value="48"/>
</dbReference>
<dbReference type="MINT" id="Q14674"/>
<dbReference type="STRING" id="9606.ENSP00000257934"/>
<dbReference type="BindingDB" id="Q14674"/>
<dbReference type="ChEMBL" id="CHEMBL4523294"/>
<dbReference type="MEROPS" id="C50.002"/>
<dbReference type="iPTMnet" id="Q14674"/>
<dbReference type="MetOSite" id="Q14674"/>
<dbReference type="PhosphoSitePlus" id="Q14674"/>
<dbReference type="SwissPalm" id="Q14674"/>
<dbReference type="BioMuta" id="ESPL1"/>
<dbReference type="DMDM" id="308153600"/>
<dbReference type="jPOST" id="Q14674"/>
<dbReference type="MassIVE" id="Q14674"/>
<dbReference type="PaxDb" id="9606-ENSP00000257934"/>
<dbReference type="PeptideAtlas" id="Q14674"/>
<dbReference type="ProteomicsDB" id="60103">
    <molecule id="Q14674-1"/>
</dbReference>
<dbReference type="ProteomicsDB" id="60104">
    <molecule id="Q14674-2"/>
</dbReference>
<dbReference type="Pumba" id="Q14674"/>
<dbReference type="Antibodypedia" id="26971">
    <property type="antibodies" value="662 antibodies from 29 providers"/>
</dbReference>
<dbReference type="DNASU" id="9700"/>
<dbReference type="Ensembl" id="ENST00000257934.9">
    <molecule id="Q14674-1"/>
    <property type="protein sequence ID" value="ENSP00000257934.4"/>
    <property type="gene ID" value="ENSG00000135476.12"/>
</dbReference>
<dbReference type="GeneID" id="9700"/>
<dbReference type="KEGG" id="hsa:9700"/>
<dbReference type="MANE-Select" id="ENST00000257934.9">
    <property type="protein sequence ID" value="ENSP00000257934.4"/>
    <property type="RefSeq nucleotide sequence ID" value="NM_012291.5"/>
    <property type="RefSeq protein sequence ID" value="NP_036423.4"/>
</dbReference>
<dbReference type="UCSC" id="uc001sck.2">
    <molecule id="Q14674-1"/>
    <property type="organism name" value="human"/>
</dbReference>
<dbReference type="AGR" id="HGNC:16856"/>
<dbReference type="CTD" id="9700"/>
<dbReference type="DisGeNET" id="9700"/>
<dbReference type="GeneCards" id="ESPL1"/>
<dbReference type="HGNC" id="HGNC:16856">
    <property type="gene designation" value="ESPL1"/>
</dbReference>
<dbReference type="HPA" id="ENSG00000135476">
    <property type="expression patterns" value="Tissue enhanced (bone marrow, esophagus, lymphoid tissue)"/>
</dbReference>
<dbReference type="MalaCards" id="ESPL1"/>
<dbReference type="MIM" id="604143">
    <property type="type" value="gene"/>
</dbReference>
<dbReference type="neXtProt" id="NX_Q14674"/>
<dbReference type="OpenTargets" id="ENSG00000135476"/>
<dbReference type="PharmGKB" id="PA27884"/>
<dbReference type="VEuPathDB" id="HostDB:ENSG00000135476"/>
<dbReference type="eggNOG" id="KOG1849">
    <property type="taxonomic scope" value="Eukaryota"/>
</dbReference>
<dbReference type="GeneTree" id="ENSGT00390000004990"/>
<dbReference type="HOGENOM" id="CLU_001558_0_0_1"/>
<dbReference type="InParanoid" id="Q14674"/>
<dbReference type="OMA" id="YMGMTAS"/>
<dbReference type="OrthoDB" id="10255632at2759"/>
<dbReference type="PAN-GO" id="Q14674">
    <property type="GO annotations" value="6 GO annotations based on evolutionary models"/>
</dbReference>
<dbReference type="PhylomeDB" id="Q14674"/>
<dbReference type="TreeFam" id="TF101169"/>
<dbReference type="BioCyc" id="MetaCyc:ENSG00000135476-MONOMER"/>
<dbReference type="BRENDA" id="3.4.22.49">
    <property type="organism ID" value="2681"/>
</dbReference>
<dbReference type="PathwayCommons" id="Q14674"/>
<dbReference type="Reactome" id="R-HSA-2467813">
    <property type="pathway name" value="Separation of Sister Chromatids"/>
</dbReference>
<dbReference type="SignaLink" id="Q14674"/>
<dbReference type="SIGNOR" id="Q14674"/>
<dbReference type="BioGRID-ORCS" id="9700">
    <property type="hits" value="819 hits in 1137 CRISPR screens"/>
</dbReference>
<dbReference type="CD-CODE" id="8C2F96ED">
    <property type="entry name" value="Centrosome"/>
</dbReference>
<dbReference type="ChiTaRS" id="ESPL1">
    <property type="organism name" value="human"/>
</dbReference>
<dbReference type="GeneWiki" id="Separase"/>
<dbReference type="GenomeRNAi" id="9700"/>
<dbReference type="Pharos" id="Q14674">
    <property type="development level" value="Tbio"/>
</dbReference>
<dbReference type="PRO" id="PR:Q14674"/>
<dbReference type="Proteomes" id="UP000005640">
    <property type="component" value="Chromosome 12"/>
</dbReference>
<dbReference type="RNAct" id="Q14674">
    <property type="molecule type" value="protein"/>
</dbReference>
<dbReference type="Bgee" id="ENSG00000135476">
    <property type="expression patterns" value="Expressed in secondary oocyte and 139 other cell types or tissues"/>
</dbReference>
<dbReference type="ExpressionAtlas" id="Q14674">
    <property type="expression patterns" value="baseline and differential"/>
</dbReference>
<dbReference type="GO" id="GO:0005813">
    <property type="term" value="C:centrosome"/>
    <property type="evidence" value="ECO:0000314"/>
    <property type="project" value="UniProtKB"/>
</dbReference>
<dbReference type="GO" id="GO:0005737">
    <property type="term" value="C:cytoplasm"/>
    <property type="evidence" value="ECO:0000318"/>
    <property type="project" value="GO_Central"/>
</dbReference>
<dbReference type="GO" id="GO:0005829">
    <property type="term" value="C:cytosol"/>
    <property type="evidence" value="ECO:0000304"/>
    <property type="project" value="Reactome"/>
</dbReference>
<dbReference type="GO" id="GO:0072686">
    <property type="term" value="C:mitotic spindle"/>
    <property type="evidence" value="ECO:0000318"/>
    <property type="project" value="GO_Central"/>
</dbReference>
<dbReference type="GO" id="GO:0005634">
    <property type="term" value="C:nucleus"/>
    <property type="evidence" value="ECO:0000318"/>
    <property type="project" value="GO_Central"/>
</dbReference>
<dbReference type="GO" id="GO:0003824">
    <property type="term" value="F:catalytic activity"/>
    <property type="evidence" value="ECO:0000303"/>
    <property type="project" value="UniProtKB"/>
</dbReference>
<dbReference type="GO" id="GO:0004197">
    <property type="term" value="F:cysteine-type endopeptidase activity"/>
    <property type="evidence" value="ECO:0000318"/>
    <property type="project" value="GO_Central"/>
</dbReference>
<dbReference type="GO" id="GO:0008234">
    <property type="term" value="F:cysteine-type peptidase activity"/>
    <property type="evidence" value="ECO:0000304"/>
    <property type="project" value="Reactome"/>
</dbReference>
<dbReference type="GO" id="GO:0006915">
    <property type="term" value="P:apoptotic process"/>
    <property type="evidence" value="ECO:0000304"/>
    <property type="project" value="UniProtKB"/>
</dbReference>
<dbReference type="GO" id="GO:0040001">
    <property type="term" value="P:establishment of mitotic spindle localization"/>
    <property type="evidence" value="ECO:0000303"/>
    <property type="project" value="UniProtKB"/>
</dbReference>
<dbReference type="GO" id="GO:0045143">
    <property type="term" value="P:homologous chromosome segregation"/>
    <property type="evidence" value="ECO:0007669"/>
    <property type="project" value="Ensembl"/>
</dbReference>
<dbReference type="GO" id="GO:0051307">
    <property type="term" value="P:meiotic chromosome separation"/>
    <property type="evidence" value="ECO:0000318"/>
    <property type="project" value="GO_Central"/>
</dbReference>
<dbReference type="GO" id="GO:0000212">
    <property type="term" value="P:meiotic spindle organization"/>
    <property type="evidence" value="ECO:0007669"/>
    <property type="project" value="Ensembl"/>
</dbReference>
<dbReference type="GO" id="GO:0000281">
    <property type="term" value="P:mitotic cytokinesis"/>
    <property type="evidence" value="ECO:0000303"/>
    <property type="project" value="UniProtKB"/>
</dbReference>
<dbReference type="GO" id="GO:0000070">
    <property type="term" value="P:mitotic sister chromatid segregation"/>
    <property type="evidence" value="ECO:0000315"/>
    <property type="project" value="UniProtKB"/>
</dbReference>
<dbReference type="GO" id="GO:0051306">
    <property type="term" value="P:mitotic sister chromatid separation"/>
    <property type="evidence" value="ECO:0000304"/>
    <property type="project" value="Reactome"/>
</dbReference>
<dbReference type="GO" id="GO:0045875">
    <property type="term" value="P:negative regulation of sister chromatid cohesion"/>
    <property type="evidence" value="ECO:0000303"/>
    <property type="project" value="UniProtKB"/>
</dbReference>
<dbReference type="GO" id="GO:0045842">
    <property type="term" value="P:positive regulation of mitotic metaphase/anaphase transition"/>
    <property type="evidence" value="ECO:0000303"/>
    <property type="project" value="UniProtKB"/>
</dbReference>
<dbReference type="GO" id="GO:0006508">
    <property type="term" value="P:proteolysis"/>
    <property type="evidence" value="ECO:0007669"/>
    <property type="project" value="UniProtKB-KW"/>
</dbReference>
<dbReference type="InterPro" id="IPR005314">
    <property type="entry name" value="Peptidase_C50"/>
</dbReference>
<dbReference type="InterPro" id="IPR030397">
    <property type="entry name" value="SEPARIN_core_dom"/>
</dbReference>
<dbReference type="PANTHER" id="PTHR12792">
    <property type="entry name" value="EXTRA SPINDLE POLES 1-RELATED"/>
    <property type="match status" value="1"/>
</dbReference>
<dbReference type="PANTHER" id="PTHR12792:SF0">
    <property type="entry name" value="SEPARIN"/>
    <property type="match status" value="1"/>
</dbReference>
<dbReference type="Pfam" id="PF03568">
    <property type="entry name" value="Peptidase_C50"/>
    <property type="match status" value="1"/>
</dbReference>
<dbReference type="PROSITE" id="PS51700">
    <property type="entry name" value="SEPARIN"/>
    <property type="match status" value="1"/>
</dbReference>
<organism>
    <name type="scientific">Homo sapiens</name>
    <name type="common">Human</name>
    <dbReference type="NCBI Taxonomy" id="9606"/>
    <lineage>
        <taxon>Eukaryota</taxon>
        <taxon>Metazoa</taxon>
        <taxon>Chordata</taxon>
        <taxon>Craniata</taxon>
        <taxon>Vertebrata</taxon>
        <taxon>Euteleostomi</taxon>
        <taxon>Mammalia</taxon>
        <taxon>Eutheria</taxon>
        <taxon>Euarchontoglires</taxon>
        <taxon>Primates</taxon>
        <taxon>Haplorrhini</taxon>
        <taxon>Catarrhini</taxon>
        <taxon>Hominidae</taxon>
        <taxon>Homo</taxon>
    </lineage>
</organism>
<gene>
    <name type="primary">ESPL1</name>
    <name type="synonym">ESP1</name>
    <name type="synonym">KIAA0165</name>
</gene>
<reference key="1">
    <citation type="journal article" date="2002" name="Curr. Biol.">
        <title>Regulation of human separase by securin binding and autocleavage.</title>
        <authorList>
            <person name="Waizenegger I."/>
            <person name="Gimenez-Abian J.F."/>
            <person name="Wernic D."/>
            <person name="Peters J.-M."/>
        </authorList>
    </citation>
    <scope>NUCLEOTIDE SEQUENCE [MRNA] (ISOFORM 1)</scope>
    <scope>ACTIVITY REGULATION</scope>
    <scope>AUTOCATALYTIC CLEAVAGE</scope>
    <scope>MUTAGENESIS OF CYS-2029; 1483-GLU--ARG-1486; 1503-GLU--ARG-1506 AND 1532-GLU--ARG-1535</scope>
</reference>
<reference key="2">
    <citation type="journal article" date="1996" name="DNA Res.">
        <title>Prediction of the coding sequences of unidentified human genes. V. The coding sequences of 40 new genes (KIAA0161-KIAA0200) deduced by analysis of cDNA clones from human cell line KG-1.</title>
        <authorList>
            <person name="Nagase T."/>
            <person name="Seki N."/>
            <person name="Ishikawa K."/>
            <person name="Tanaka A."/>
            <person name="Nomura N."/>
        </authorList>
    </citation>
    <scope>NUCLEOTIDE SEQUENCE [LARGE SCALE MRNA] (ISOFORM 2)</scope>
    <source>
        <tissue>Bone marrow</tissue>
    </source>
</reference>
<reference key="3">
    <citation type="journal article" date="2006" name="Nature">
        <title>The finished DNA sequence of human chromosome 12.</title>
        <authorList>
            <person name="Scherer S.E."/>
            <person name="Muzny D.M."/>
            <person name="Buhay C.J."/>
            <person name="Chen R."/>
            <person name="Cree A."/>
            <person name="Ding Y."/>
            <person name="Dugan-Rocha S."/>
            <person name="Gill R."/>
            <person name="Gunaratne P."/>
            <person name="Harris R.A."/>
            <person name="Hawes A.C."/>
            <person name="Hernandez J."/>
            <person name="Hodgson A.V."/>
            <person name="Hume J."/>
            <person name="Jackson A."/>
            <person name="Khan Z.M."/>
            <person name="Kovar-Smith C."/>
            <person name="Lewis L.R."/>
            <person name="Lozado R.J."/>
            <person name="Metzker M.L."/>
            <person name="Milosavljevic A."/>
            <person name="Miner G.R."/>
            <person name="Montgomery K.T."/>
            <person name="Morgan M.B."/>
            <person name="Nazareth L.V."/>
            <person name="Scott G."/>
            <person name="Sodergren E."/>
            <person name="Song X.-Z."/>
            <person name="Steffen D."/>
            <person name="Lovering R.C."/>
            <person name="Wheeler D.A."/>
            <person name="Worley K.C."/>
            <person name="Yuan Y."/>
            <person name="Zhang Z."/>
            <person name="Adams C.Q."/>
            <person name="Ansari-Lari M.A."/>
            <person name="Ayele M."/>
            <person name="Brown M.J."/>
            <person name="Chen G."/>
            <person name="Chen Z."/>
            <person name="Clerc-Blankenburg K.P."/>
            <person name="Davis C."/>
            <person name="Delgado O."/>
            <person name="Dinh H.H."/>
            <person name="Draper H."/>
            <person name="Gonzalez-Garay M.L."/>
            <person name="Havlak P."/>
            <person name="Jackson L.R."/>
            <person name="Jacob L.S."/>
            <person name="Kelly S.H."/>
            <person name="Li L."/>
            <person name="Li Z."/>
            <person name="Liu J."/>
            <person name="Liu W."/>
            <person name="Lu J."/>
            <person name="Maheshwari M."/>
            <person name="Nguyen B.-V."/>
            <person name="Okwuonu G.O."/>
            <person name="Pasternak S."/>
            <person name="Perez L.M."/>
            <person name="Plopper F.J.H."/>
            <person name="Santibanez J."/>
            <person name="Shen H."/>
            <person name="Tabor P.E."/>
            <person name="Verduzco D."/>
            <person name="Waldron L."/>
            <person name="Wang Q."/>
            <person name="Williams G.A."/>
            <person name="Zhang J."/>
            <person name="Zhou J."/>
            <person name="Allen C.C."/>
            <person name="Amin A.G."/>
            <person name="Anyalebechi V."/>
            <person name="Bailey M."/>
            <person name="Barbaria J.A."/>
            <person name="Bimage K.E."/>
            <person name="Bryant N.P."/>
            <person name="Burch P.E."/>
            <person name="Burkett C.E."/>
            <person name="Burrell K.L."/>
            <person name="Calderon E."/>
            <person name="Cardenas V."/>
            <person name="Carter K."/>
            <person name="Casias K."/>
            <person name="Cavazos I."/>
            <person name="Cavazos S.R."/>
            <person name="Ceasar H."/>
            <person name="Chacko J."/>
            <person name="Chan S.N."/>
            <person name="Chavez D."/>
            <person name="Christopoulos C."/>
            <person name="Chu J."/>
            <person name="Cockrell R."/>
            <person name="Cox C.D."/>
            <person name="Dang M."/>
            <person name="Dathorne S.R."/>
            <person name="David R."/>
            <person name="Davis C.M."/>
            <person name="Davy-Carroll L."/>
            <person name="Deshazo D.R."/>
            <person name="Donlin J.E."/>
            <person name="D'Souza L."/>
            <person name="Eaves K.A."/>
            <person name="Egan A."/>
            <person name="Emery-Cohen A.J."/>
            <person name="Escotto M."/>
            <person name="Flagg N."/>
            <person name="Forbes L.D."/>
            <person name="Gabisi A.M."/>
            <person name="Garza M."/>
            <person name="Hamilton C."/>
            <person name="Henderson N."/>
            <person name="Hernandez O."/>
            <person name="Hines S."/>
            <person name="Hogues M.E."/>
            <person name="Huang M."/>
            <person name="Idlebird D.G."/>
            <person name="Johnson R."/>
            <person name="Jolivet A."/>
            <person name="Jones S."/>
            <person name="Kagan R."/>
            <person name="King L.M."/>
            <person name="Leal B."/>
            <person name="Lebow H."/>
            <person name="Lee S."/>
            <person name="LeVan J.M."/>
            <person name="Lewis L.C."/>
            <person name="London P."/>
            <person name="Lorensuhewa L.M."/>
            <person name="Loulseged H."/>
            <person name="Lovett D.A."/>
            <person name="Lucier A."/>
            <person name="Lucier R.L."/>
            <person name="Ma J."/>
            <person name="Madu R.C."/>
            <person name="Mapua P."/>
            <person name="Martindale A.D."/>
            <person name="Martinez E."/>
            <person name="Massey E."/>
            <person name="Mawhiney S."/>
            <person name="Meador M.G."/>
            <person name="Mendez S."/>
            <person name="Mercado C."/>
            <person name="Mercado I.C."/>
            <person name="Merritt C.E."/>
            <person name="Miner Z.L."/>
            <person name="Minja E."/>
            <person name="Mitchell T."/>
            <person name="Mohabbat F."/>
            <person name="Mohabbat K."/>
            <person name="Montgomery B."/>
            <person name="Moore N."/>
            <person name="Morris S."/>
            <person name="Munidasa M."/>
            <person name="Ngo R.N."/>
            <person name="Nguyen N.B."/>
            <person name="Nickerson E."/>
            <person name="Nwaokelemeh O.O."/>
            <person name="Nwokenkwo S."/>
            <person name="Obregon M."/>
            <person name="Oguh M."/>
            <person name="Oragunye N."/>
            <person name="Oviedo R.J."/>
            <person name="Parish B.J."/>
            <person name="Parker D.N."/>
            <person name="Parrish J."/>
            <person name="Parks K.L."/>
            <person name="Paul H.A."/>
            <person name="Payton B.A."/>
            <person name="Perez A."/>
            <person name="Perrin W."/>
            <person name="Pickens A."/>
            <person name="Primus E.L."/>
            <person name="Pu L.-L."/>
            <person name="Puazo M."/>
            <person name="Quiles M.M."/>
            <person name="Quiroz J.B."/>
            <person name="Rabata D."/>
            <person name="Reeves K."/>
            <person name="Ruiz S.J."/>
            <person name="Shao H."/>
            <person name="Sisson I."/>
            <person name="Sonaike T."/>
            <person name="Sorelle R.P."/>
            <person name="Sutton A.E."/>
            <person name="Svatek A.F."/>
            <person name="Svetz L.A."/>
            <person name="Tamerisa K.S."/>
            <person name="Taylor T.R."/>
            <person name="Teague B."/>
            <person name="Thomas N."/>
            <person name="Thorn R.D."/>
            <person name="Trejos Z.Y."/>
            <person name="Trevino B.K."/>
            <person name="Ukegbu O.N."/>
            <person name="Urban J.B."/>
            <person name="Vasquez L.I."/>
            <person name="Vera V.A."/>
            <person name="Villasana D.M."/>
            <person name="Wang L."/>
            <person name="Ward-Moore S."/>
            <person name="Warren J.T."/>
            <person name="Wei X."/>
            <person name="White F."/>
            <person name="Williamson A.L."/>
            <person name="Wleczyk R."/>
            <person name="Wooden H.S."/>
            <person name="Wooden S.H."/>
            <person name="Yen J."/>
            <person name="Yoon L."/>
            <person name="Yoon V."/>
            <person name="Zorrilla S.E."/>
            <person name="Nelson D."/>
            <person name="Kucherlapati R."/>
            <person name="Weinstock G."/>
            <person name="Gibbs R.A."/>
        </authorList>
    </citation>
    <scope>NUCLEOTIDE SEQUENCE [LARGE SCALE GENOMIC DNA]</scope>
</reference>
<reference key="4">
    <citation type="journal article" date="1999" name="Science">
        <title>Identification of a vertebrate sister-chromatid separation inhibitor involved in transformation and tumorigenesis.</title>
        <authorList>
            <person name="Zou H."/>
            <person name="McGarry T.J."/>
            <person name="Bernal T."/>
            <person name="Kirschner M.W."/>
        </authorList>
    </citation>
    <scope>PARTIAL NUCLEOTIDE SEQUENCE [MRNA]</scope>
    <scope>FUNCTION</scope>
    <scope>INTERACTION WITH PTTG1</scope>
</reference>
<reference key="5">
    <citation type="journal article" date="2001" name="Cell">
        <title>Dual inhibition of sister chromatid separation at metaphase.</title>
        <authorList>
            <person name="Stemmann O."/>
            <person name="Zou H."/>
            <person name="Gerber S.A."/>
            <person name="Gygi S.P."/>
            <person name="Kirschner M.W."/>
        </authorList>
    </citation>
    <scope>PROTEIN SEQUENCE OF 1117-1130</scope>
    <scope>ACTIVITY REGULATION</scope>
    <scope>PHOSPHORYLATION AT SER-1126</scope>
</reference>
<reference key="6">
    <citation type="journal article" date="2002" name="FEBS Lett.">
        <title>Anaphase specific auto-cleavage of separase.</title>
        <authorList>
            <person name="Zou H."/>
            <person name="Stemman O."/>
            <person name="Anderson J.S."/>
            <person name="Mann M."/>
            <person name="Kirschner M.W."/>
        </authorList>
    </citation>
    <scope>PROTEIN SEQUENCE OF 1507-1517</scope>
    <scope>ACTIVITY REGULATION</scope>
    <scope>AUTOCATALYTIC CLEAVAGE</scope>
    <scope>MUTAGENESIS OF ARG-1486; ARG-1506 AND ARG-1535</scope>
</reference>
<reference key="7">
    <citation type="journal article" date="2001" name="Science">
        <title>Cohesin cleavage by separase required for anaphase and cytokinesis in human cells.</title>
        <authorList>
            <person name="Hauf S."/>
            <person name="Waizenegger I.C."/>
            <person name="Peters J.-M."/>
        </authorList>
    </citation>
    <scope>FUNCTION</scope>
    <scope>INTERACTION WITH RAD21</scope>
</reference>
<reference key="8">
    <citation type="journal article" date="2008" name="Proc. Natl. Acad. Sci. U.S.A.">
        <title>A quantitative atlas of mitotic phosphorylation.</title>
        <authorList>
            <person name="Dephoure N."/>
            <person name="Zhou C."/>
            <person name="Villen J."/>
            <person name="Beausoleil S.A."/>
            <person name="Bakalarski C.E."/>
            <person name="Elledge S.J."/>
            <person name="Gygi S.P."/>
        </authorList>
    </citation>
    <scope>PHOSPHORYLATION [LARGE SCALE ANALYSIS] AT SER-1396; SER-1399 AND SER-1508</scope>
    <scope>IDENTIFICATION BY MASS SPECTROMETRY [LARGE SCALE ANALYSIS]</scope>
    <source>
        <tissue>Cervix carcinoma</tissue>
    </source>
</reference>
<reference key="9">
    <citation type="journal article" date="2009" name="Anal. Chem.">
        <title>Lys-N and trypsin cover complementary parts of the phosphoproteome in a refined SCX-based approach.</title>
        <authorList>
            <person name="Gauci S."/>
            <person name="Helbig A.O."/>
            <person name="Slijper M."/>
            <person name="Krijgsveld J."/>
            <person name="Heck A.J."/>
            <person name="Mohammed S."/>
        </authorList>
    </citation>
    <scope>IDENTIFICATION BY MASS SPECTROMETRY [LARGE SCALE ANALYSIS]</scope>
</reference>
<reference key="10">
    <citation type="journal article" date="2009" name="Sci. Signal.">
        <title>Quantitative phosphoproteomic analysis of T cell receptor signaling reveals system-wide modulation of protein-protein interactions.</title>
        <authorList>
            <person name="Mayya V."/>
            <person name="Lundgren D.H."/>
            <person name="Hwang S.-I."/>
            <person name="Rezaul K."/>
            <person name="Wu L."/>
            <person name="Eng J.K."/>
            <person name="Rodionov V."/>
            <person name="Han D.K."/>
        </authorList>
    </citation>
    <scope>PHOSPHORYLATION [LARGE SCALE ANALYSIS] AT SER-1396 AND SER-1399</scope>
    <scope>IDENTIFICATION BY MASS SPECTROMETRY [LARGE SCALE ANALYSIS]</scope>
    <source>
        <tissue>Leukemic T-cell</tissue>
    </source>
</reference>
<reference key="11">
    <citation type="journal article" date="2010" name="Sci. Signal.">
        <title>Quantitative phosphoproteomics reveals widespread full phosphorylation site occupancy during mitosis.</title>
        <authorList>
            <person name="Olsen J.V."/>
            <person name="Vermeulen M."/>
            <person name="Santamaria A."/>
            <person name="Kumar C."/>
            <person name="Miller M.L."/>
            <person name="Jensen L.J."/>
            <person name="Gnad F."/>
            <person name="Cox J."/>
            <person name="Jensen T.S."/>
            <person name="Nigg E.A."/>
            <person name="Brunak S."/>
            <person name="Mann M."/>
        </authorList>
    </citation>
    <scope>PHOSPHORYLATION [LARGE SCALE ANALYSIS] AT SER-1508</scope>
    <scope>IDENTIFICATION BY MASS SPECTROMETRY [LARGE SCALE ANALYSIS]</scope>
    <source>
        <tissue>Cervix carcinoma</tissue>
    </source>
</reference>
<reference key="12">
    <citation type="journal article" date="2011" name="BMC Syst. Biol.">
        <title>Initial characterization of the human central proteome.</title>
        <authorList>
            <person name="Burkard T.R."/>
            <person name="Planyavsky M."/>
            <person name="Kaupe I."/>
            <person name="Breitwieser F.P."/>
            <person name="Buerckstuemmer T."/>
            <person name="Bennett K.L."/>
            <person name="Superti-Furga G."/>
            <person name="Colinge J."/>
        </authorList>
    </citation>
    <scope>IDENTIFICATION BY MASS SPECTROMETRY [LARGE SCALE ANALYSIS]</scope>
</reference>
<reference key="13">
    <citation type="journal article" date="2013" name="J. Proteome Res.">
        <title>Toward a comprehensive characterization of a human cancer cell phosphoproteome.</title>
        <authorList>
            <person name="Zhou H."/>
            <person name="Di Palma S."/>
            <person name="Preisinger C."/>
            <person name="Peng M."/>
            <person name="Polat A.N."/>
            <person name="Heck A.J."/>
            <person name="Mohammed S."/>
        </authorList>
    </citation>
    <scope>PHOSPHORYLATION [LARGE SCALE ANALYSIS] AT SER-1508</scope>
    <scope>IDENTIFICATION BY MASS SPECTROMETRY [LARGE SCALE ANALYSIS]</scope>
    <source>
        <tissue>Cervix carcinoma</tissue>
        <tissue>Erythroleukemia</tissue>
    </source>
</reference>